<evidence type="ECO:0000250" key="1"/>
<evidence type="ECO:0000250" key="2">
    <source>
        <dbReference type="UniProtKB" id="O60220"/>
    </source>
</evidence>
<evidence type="ECO:0000250" key="3">
    <source>
        <dbReference type="UniProtKB" id="Q9WVA2"/>
    </source>
</evidence>
<evidence type="ECO:0000305" key="4"/>
<sequence length="97" mass="11042">MESSSSSSGSALAAVDPQLQHFIEVETQKQRFQQLVHQMTELCWEKCMDKPGPKLDSRAEACFVNCVERFIDTSQFILNRLEQTQKSKPVFSESLSD</sequence>
<dbReference type="EMBL" id="AF150082">
    <property type="protein sequence ID" value="AAD39989.1"/>
    <property type="molecule type" value="mRNA"/>
</dbReference>
<dbReference type="EMBL" id="BC060552">
    <property type="protein sequence ID" value="AAH60552.1"/>
    <property type="molecule type" value="mRNA"/>
</dbReference>
<dbReference type="RefSeq" id="NP_445822.1">
    <property type="nucleotide sequence ID" value="NM_053370.3"/>
</dbReference>
<dbReference type="SMR" id="Q9WVA1"/>
<dbReference type="FunCoup" id="Q9WVA1">
    <property type="interactions" value="1228"/>
</dbReference>
<dbReference type="STRING" id="10116.ENSRNOP00000015043"/>
<dbReference type="iPTMnet" id="Q9WVA1"/>
<dbReference type="PhosphoSitePlus" id="Q9WVA1"/>
<dbReference type="jPOST" id="Q9WVA1"/>
<dbReference type="PaxDb" id="10116-ENSRNOP00000015043"/>
<dbReference type="Ensembl" id="ENSRNOT00000108899.1">
    <property type="protein sequence ID" value="ENSRNOP00000084461.1"/>
    <property type="gene ID" value="ENSRNOG00000064119.1"/>
</dbReference>
<dbReference type="GeneID" id="84383"/>
<dbReference type="KEGG" id="rno:84383"/>
<dbReference type="UCSC" id="RGD:621801">
    <property type="organism name" value="rat"/>
</dbReference>
<dbReference type="AGR" id="RGD:621801"/>
<dbReference type="CTD" id="30058"/>
<dbReference type="RGD" id="621801">
    <property type="gene designation" value="Timm8a"/>
</dbReference>
<dbReference type="eggNOG" id="KOG3489">
    <property type="taxonomic scope" value="Eukaryota"/>
</dbReference>
<dbReference type="GeneTree" id="ENSGT00940000154661"/>
<dbReference type="InParanoid" id="Q9WVA1"/>
<dbReference type="OMA" id="DLCYTGT"/>
<dbReference type="OrthoDB" id="344165at2759"/>
<dbReference type="PhylomeDB" id="Q9WVA1"/>
<dbReference type="PRO" id="PR:Q9WVA1"/>
<dbReference type="Proteomes" id="UP000002494">
    <property type="component" value="Chromosome X"/>
</dbReference>
<dbReference type="GO" id="GO:0005743">
    <property type="term" value="C:mitochondrial inner membrane"/>
    <property type="evidence" value="ECO:0000304"/>
    <property type="project" value="RGD"/>
</dbReference>
<dbReference type="GO" id="GO:0005758">
    <property type="term" value="C:mitochondrial intermembrane space"/>
    <property type="evidence" value="ECO:0000266"/>
    <property type="project" value="RGD"/>
</dbReference>
<dbReference type="GO" id="GO:0042719">
    <property type="term" value="C:mitochondrial intermembrane space protein transporter complex"/>
    <property type="evidence" value="ECO:0000266"/>
    <property type="project" value="RGD"/>
</dbReference>
<dbReference type="GO" id="GO:0042802">
    <property type="term" value="F:identical protein binding"/>
    <property type="evidence" value="ECO:0000266"/>
    <property type="project" value="RGD"/>
</dbReference>
<dbReference type="GO" id="GO:0008270">
    <property type="term" value="F:zinc ion binding"/>
    <property type="evidence" value="ECO:0000314"/>
    <property type="project" value="RGD"/>
</dbReference>
<dbReference type="GO" id="GO:0045039">
    <property type="term" value="P:protein insertion into mitochondrial inner membrane"/>
    <property type="evidence" value="ECO:0000266"/>
    <property type="project" value="RGD"/>
</dbReference>
<dbReference type="GO" id="GO:0006626">
    <property type="term" value="P:protein targeting to mitochondrion"/>
    <property type="evidence" value="ECO:0000314"/>
    <property type="project" value="RGD"/>
</dbReference>
<dbReference type="FunFam" id="1.10.287.810:FF:000003">
    <property type="entry name" value="Mitochondrial import inner membrane translocase subunit TIM8"/>
    <property type="match status" value="1"/>
</dbReference>
<dbReference type="Gene3D" id="1.10.287.810">
    <property type="entry name" value="Mitochondrial import inner membrane translocase subunit tim13 like domains"/>
    <property type="match status" value="1"/>
</dbReference>
<dbReference type="InterPro" id="IPR004217">
    <property type="entry name" value="Tim10-like"/>
</dbReference>
<dbReference type="InterPro" id="IPR035427">
    <property type="entry name" value="Tim10-like_dom_sf"/>
</dbReference>
<dbReference type="Pfam" id="PF02953">
    <property type="entry name" value="zf-Tim10_DDP"/>
    <property type="match status" value="1"/>
</dbReference>
<dbReference type="SUPFAM" id="SSF144122">
    <property type="entry name" value="Tim10-like"/>
    <property type="match status" value="1"/>
</dbReference>
<gene>
    <name type="primary">Timm8a</name>
    <name type="synonym">Ddp1</name>
    <name type="synonym">Tim8a</name>
</gene>
<accession>Q9WVA1</accession>
<name>TIM8A_RAT</name>
<proteinExistence type="evidence at protein level"/>
<organism>
    <name type="scientific">Rattus norvegicus</name>
    <name type="common">Rat</name>
    <dbReference type="NCBI Taxonomy" id="10116"/>
    <lineage>
        <taxon>Eukaryota</taxon>
        <taxon>Metazoa</taxon>
        <taxon>Chordata</taxon>
        <taxon>Craniata</taxon>
        <taxon>Vertebrata</taxon>
        <taxon>Euteleostomi</taxon>
        <taxon>Mammalia</taxon>
        <taxon>Eutheria</taxon>
        <taxon>Euarchontoglires</taxon>
        <taxon>Glires</taxon>
        <taxon>Rodentia</taxon>
        <taxon>Myomorpha</taxon>
        <taxon>Muroidea</taxon>
        <taxon>Muridae</taxon>
        <taxon>Murinae</taxon>
        <taxon>Rattus</taxon>
    </lineage>
</organism>
<keyword id="KW-0143">Chaperone</keyword>
<keyword id="KW-0903">Direct protein sequencing</keyword>
<keyword id="KW-1015">Disulfide bond</keyword>
<keyword id="KW-0472">Membrane</keyword>
<keyword id="KW-0479">Metal-binding</keyword>
<keyword id="KW-0496">Mitochondrion</keyword>
<keyword id="KW-0999">Mitochondrion inner membrane</keyword>
<keyword id="KW-0597">Phosphoprotein</keyword>
<keyword id="KW-0653">Protein transport</keyword>
<keyword id="KW-1185">Reference proteome</keyword>
<keyword id="KW-0811">Translocation</keyword>
<keyword id="KW-0813">Transport</keyword>
<keyword id="KW-0862">Zinc</keyword>
<comment type="function">
    <text evidence="1">Mitochondrial intermembrane chaperone that participates in the import and insertion of some multi-pass transmembrane proteins into the mitochondrial inner membrane. Also required for the transfer of beta-barrel precursors from the TOM complex to the sorting and assembly machinery (SAM complex) of the outer membrane. Acts as a chaperone-like protein that protects the hydrophobic precursors from aggregation and guide them through the mitochondrial intermembrane space. The TIMM8-TIMM13 complex mediates the import of proteins such as TIMM23, SLC25A12/ARALAR1 and SLC25A13/ARALAR2, while the predominant TIMM9-TIMM10 70 kDa complex mediates the import of much more proteins (By similarity).</text>
</comment>
<comment type="subunit">
    <text evidence="1">Heterohexamer; composed of 3 copies of TIMM8A and 3 copies of TIMM13, named soluble 70 kDa complex. Associates with the TIM22 complex, whose core is composed of TIMM22 (By similarity).</text>
</comment>
<comment type="subcellular location">
    <subcellularLocation>
        <location evidence="1">Mitochondrion inner membrane</location>
        <topology evidence="1">Peripheral membrane protein</topology>
        <orientation evidence="1">Intermembrane side</orientation>
    </subcellularLocation>
</comment>
<comment type="domain">
    <text evidence="1">The twin CX3C motif contains 4 conserved Cys residues that form 2 disulfide bonds in the mitochondrial intermembrane space. However, during the transit of TIMM8A from cytoplasm into mitochondrion, the Cys residues probably coordinate zinc, thereby preventing folding and allowing its transfer across mitochondrial outer membrane (By similarity).</text>
</comment>
<comment type="similarity">
    <text evidence="4">Belongs to the small Tim family.</text>
</comment>
<protein>
    <recommendedName>
        <fullName>Mitochondrial import inner membrane translocase subunit Tim8 A</fullName>
    </recommendedName>
    <alternativeName>
        <fullName>Deafness dystonia protein 1 homolog</fullName>
    </alternativeName>
</protein>
<reference key="1">
    <citation type="journal article" date="1999" name="FEBS Lett.">
        <title>The mitochondrial TIM22 preprotein translocase is highly conserved throughout the eukaryotic kingdom.</title>
        <authorList>
            <person name="Bauer M.F."/>
            <person name="Rothbauer U."/>
            <person name="Muehlenbein N."/>
            <person name="Smith R.J.H."/>
            <person name="Gerbitz K.-D."/>
            <person name="Neupert W."/>
            <person name="Brunner M."/>
            <person name="Hofmann S."/>
        </authorList>
    </citation>
    <scope>NUCLEOTIDE SEQUENCE [MRNA]</scope>
</reference>
<reference key="2">
    <citation type="journal article" date="2004" name="Genome Res.">
        <title>The status, quality, and expansion of the NIH full-length cDNA project: the Mammalian Gene Collection (MGC).</title>
        <authorList>
            <consortium name="The MGC Project Team"/>
        </authorList>
    </citation>
    <scope>NUCLEOTIDE SEQUENCE [LARGE SCALE MRNA]</scope>
    <source>
        <tissue>Pituitary</tissue>
    </source>
</reference>
<reference key="3">
    <citation type="submission" date="2006-11" db="UniProtKB">
        <authorList>
            <person name="Lubec G."/>
            <person name="Afjehi-Sadat L."/>
        </authorList>
    </citation>
    <scope>PROTEIN SEQUENCE OF 70-80</scope>
    <scope>IDENTIFICATION BY MASS SPECTROMETRY</scope>
    <source>
        <strain>Sprague-Dawley</strain>
        <tissue>Spinal cord</tissue>
    </source>
</reference>
<feature type="chain" id="PRO_0000193586" description="Mitochondrial import inner membrane translocase subunit Tim8 A">
    <location>
        <begin position="1"/>
        <end position="97"/>
    </location>
</feature>
<feature type="short sequence motif" description="Twin CX3C motif">
    <location>
        <begin position="43"/>
        <end position="66"/>
    </location>
</feature>
<feature type="modified residue" description="Phosphoserine" evidence="3">
    <location>
        <position position="57"/>
    </location>
</feature>
<feature type="modified residue" description="Phosphoserine" evidence="3">
    <location>
        <position position="87"/>
    </location>
</feature>
<feature type="modified residue" description="Phosphoserine" evidence="2">
    <location>
        <position position="94"/>
    </location>
</feature>
<feature type="modified residue" description="Phosphoserine" evidence="2">
    <location>
        <position position="96"/>
    </location>
</feature>
<feature type="disulfide bond" evidence="1">
    <location>
        <begin position="43"/>
        <end position="66"/>
    </location>
</feature>
<feature type="disulfide bond" evidence="1">
    <location>
        <begin position="47"/>
        <end position="62"/>
    </location>
</feature>